<gene>
    <name evidence="1" type="primary">trmFO</name>
    <name type="synonym">gid</name>
    <name type="ordered locus">BARBAKC583_0551</name>
</gene>
<feature type="chain" id="PRO_1000063911" description="Methylenetetrahydrofolate--tRNA-(uracil-5-)-methyltransferase TrmFO">
    <location>
        <begin position="1"/>
        <end position="464"/>
    </location>
</feature>
<feature type="binding site" evidence="1">
    <location>
        <begin position="13"/>
        <end position="18"/>
    </location>
    <ligand>
        <name>FAD</name>
        <dbReference type="ChEBI" id="CHEBI:57692"/>
    </ligand>
</feature>
<organism>
    <name type="scientific">Bartonella bacilliformis (strain ATCC 35685 / KC583 / Herrer 020/F12,63)</name>
    <dbReference type="NCBI Taxonomy" id="360095"/>
    <lineage>
        <taxon>Bacteria</taxon>
        <taxon>Pseudomonadati</taxon>
        <taxon>Pseudomonadota</taxon>
        <taxon>Alphaproteobacteria</taxon>
        <taxon>Hyphomicrobiales</taxon>
        <taxon>Bartonellaceae</taxon>
        <taxon>Bartonella</taxon>
    </lineage>
</organism>
<accession>A1USB2</accession>
<dbReference type="EC" id="2.1.1.74" evidence="1"/>
<dbReference type="EMBL" id="CP000524">
    <property type="protein sequence ID" value="ABM44898.1"/>
    <property type="molecule type" value="Genomic_DNA"/>
</dbReference>
<dbReference type="RefSeq" id="WP_005766693.1">
    <property type="nucleotide sequence ID" value="NC_008783.1"/>
</dbReference>
<dbReference type="SMR" id="A1USB2"/>
<dbReference type="STRING" id="360095.BARBAKC583_0551"/>
<dbReference type="GeneID" id="4684244"/>
<dbReference type="KEGG" id="bbk:BARBAKC583_0551"/>
<dbReference type="PATRIC" id="fig|360095.6.peg.537"/>
<dbReference type="eggNOG" id="COG1206">
    <property type="taxonomic scope" value="Bacteria"/>
</dbReference>
<dbReference type="HOGENOM" id="CLU_033057_1_0_5"/>
<dbReference type="OrthoDB" id="9803114at2"/>
<dbReference type="Proteomes" id="UP000000643">
    <property type="component" value="Chromosome"/>
</dbReference>
<dbReference type="GO" id="GO:0005829">
    <property type="term" value="C:cytosol"/>
    <property type="evidence" value="ECO:0007669"/>
    <property type="project" value="TreeGrafter"/>
</dbReference>
<dbReference type="GO" id="GO:0050660">
    <property type="term" value="F:flavin adenine dinucleotide binding"/>
    <property type="evidence" value="ECO:0007669"/>
    <property type="project" value="UniProtKB-UniRule"/>
</dbReference>
<dbReference type="GO" id="GO:0047151">
    <property type="term" value="F:tRNA (uracil(54)-C5)-methyltransferase activity, 5,10-methylenetetrahydrofolate-dependent"/>
    <property type="evidence" value="ECO:0007669"/>
    <property type="project" value="UniProtKB-UniRule"/>
</dbReference>
<dbReference type="GO" id="GO:0030488">
    <property type="term" value="P:tRNA methylation"/>
    <property type="evidence" value="ECO:0007669"/>
    <property type="project" value="TreeGrafter"/>
</dbReference>
<dbReference type="GO" id="GO:0002098">
    <property type="term" value="P:tRNA wobble uridine modification"/>
    <property type="evidence" value="ECO:0007669"/>
    <property type="project" value="TreeGrafter"/>
</dbReference>
<dbReference type="Gene3D" id="3.50.50.60">
    <property type="entry name" value="FAD/NAD(P)-binding domain"/>
    <property type="match status" value="2"/>
</dbReference>
<dbReference type="HAMAP" id="MF_01037">
    <property type="entry name" value="TrmFO"/>
    <property type="match status" value="1"/>
</dbReference>
<dbReference type="InterPro" id="IPR036188">
    <property type="entry name" value="FAD/NAD-bd_sf"/>
</dbReference>
<dbReference type="InterPro" id="IPR002218">
    <property type="entry name" value="MnmG-rel"/>
</dbReference>
<dbReference type="InterPro" id="IPR020595">
    <property type="entry name" value="MnmG-rel_CS"/>
</dbReference>
<dbReference type="InterPro" id="IPR040131">
    <property type="entry name" value="MnmG_N"/>
</dbReference>
<dbReference type="InterPro" id="IPR004417">
    <property type="entry name" value="TrmFO"/>
</dbReference>
<dbReference type="NCBIfam" id="TIGR00137">
    <property type="entry name" value="gid_trmFO"/>
    <property type="match status" value="1"/>
</dbReference>
<dbReference type="NCBIfam" id="NF003739">
    <property type="entry name" value="PRK05335.1"/>
    <property type="match status" value="1"/>
</dbReference>
<dbReference type="PANTHER" id="PTHR11806">
    <property type="entry name" value="GLUCOSE INHIBITED DIVISION PROTEIN A"/>
    <property type="match status" value="1"/>
</dbReference>
<dbReference type="PANTHER" id="PTHR11806:SF2">
    <property type="entry name" value="METHYLENETETRAHYDROFOLATE--TRNA-(URACIL-5-)-METHYLTRANSFERASE TRMFO"/>
    <property type="match status" value="1"/>
</dbReference>
<dbReference type="Pfam" id="PF01134">
    <property type="entry name" value="GIDA"/>
    <property type="match status" value="1"/>
</dbReference>
<dbReference type="SUPFAM" id="SSF51905">
    <property type="entry name" value="FAD/NAD(P)-binding domain"/>
    <property type="match status" value="1"/>
</dbReference>
<dbReference type="PROSITE" id="PS01281">
    <property type="entry name" value="GIDA_2"/>
    <property type="match status" value="1"/>
</dbReference>
<reference key="1">
    <citation type="submission" date="2006-12" db="EMBL/GenBank/DDBJ databases">
        <authorList>
            <person name="Hendrix L."/>
            <person name="Mohamoud Y."/>
            <person name="Radune D."/>
            <person name="Shvartsbeyn A."/>
            <person name="Daugherty S."/>
            <person name="Dodson R."/>
            <person name="Durkin A.S."/>
            <person name="Harkins D."/>
            <person name="Huot H."/>
            <person name="Kothari S.P."/>
            <person name="Madupu R."/>
            <person name="Li J."/>
            <person name="Nelson W.C."/>
            <person name="Shrivastava S."/>
            <person name="Giglio M.G."/>
            <person name="Haft D."/>
            <person name="Selengut J."/>
            <person name="Fraser-Ligget C."/>
            <person name="Seshadri R."/>
        </authorList>
    </citation>
    <scope>NUCLEOTIDE SEQUENCE [LARGE SCALE GENOMIC DNA]</scope>
    <source>
        <strain>ATCC 35685 / KC583 / Herrer 020/F12,63</strain>
    </source>
</reference>
<proteinExistence type="inferred from homology"/>
<sequence>MLNKLNLPIHIIGGGLAGSEASWQIAQLGIPVILHEMRPQRLSEAHKTDKLAELVCSNSFRSDDSLTNAVGLLHAEMRLAKSLIMKAADANKVPAGSALAVDRDGFSQTVTESLENHPLITIKREEIHDIPENWHNVIIATGPLTSPALAYAIQAVTGTEALSFFDAIAPIIYTDSINMNICWYQSRYDKIGPGGTGKDYINCPLDKEQYEAFIQALKDGEKIEFREFENVPYFDGCLPIEVMAERGVETLRHGPMKPMGLTNTHTPKVKAYAIVQLRQDNMLGTLYNMVGFQTKLKYSEQVRIFRTIPGLEKAEFARLGGLHRNTYLDSPTILDETLRLKKKPQLRFAGQITGCEGYVESSAIGLLAGRFAAAEYNNTYPSLPPKTTAFGALLNHITSGYIVTQETEKHSFQPMNINFGLFPPIDSTNHQRKTMQYKEKKLAKRQAIVERALNDCTQWLNGLK</sequence>
<protein>
    <recommendedName>
        <fullName evidence="1">Methylenetetrahydrofolate--tRNA-(uracil-5-)-methyltransferase TrmFO</fullName>
        <ecNumber evidence="1">2.1.1.74</ecNumber>
    </recommendedName>
    <alternativeName>
        <fullName evidence="1">Folate-dependent tRNA (uracil-5-)-methyltransferase</fullName>
    </alternativeName>
    <alternativeName>
        <fullName evidence="1">Folate-dependent tRNA(M-5-U54)-methyltransferase</fullName>
    </alternativeName>
</protein>
<name>TRMFO_BARBK</name>
<comment type="function">
    <text evidence="1">Catalyzes the folate-dependent formation of 5-methyl-uridine at position 54 (M-5-U54) in all tRNAs.</text>
</comment>
<comment type="catalytic activity">
    <reaction evidence="1">
        <text>uridine(54) in tRNA + (6R)-5,10-methylene-5,6,7,8-tetrahydrofolate + NADH + H(+) = 5-methyluridine(54) in tRNA + (6S)-5,6,7,8-tetrahydrofolate + NAD(+)</text>
        <dbReference type="Rhea" id="RHEA:16873"/>
        <dbReference type="Rhea" id="RHEA-COMP:10167"/>
        <dbReference type="Rhea" id="RHEA-COMP:10193"/>
        <dbReference type="ChEBI" id="CHEBI:15378"/>
        <dbReference type="ChEBI" id="CHEBI:15636"/>
        <dbReference type="ChEBI" id="CHEBI:57453"/>
        <dbReference type="ChEBI" id="CHEBI:57540"/>
        <dbReference type="ChEBI" id="CHEBI:57945"/>
        <dbReference type="ChEBI" id="CHEBI:65315"/>
        <dbReference type="ChEBI" id="CHEBI:74447"/>
        <dbReference type="EC" id="2.1.1.74"/>
    </reaction>
</comment>
<comment type="catalytic activity">
    <reaction evidence="1">
        <text>uridine(54) in tRNA + (6R)-5,10-methylene-5,6,7,8-tetrahydrofolate + NADPH + H(+) = 5-methyluridine(54) in tRNA + (6S)-5,6,7,8-tetrahydrofolate + NADP(+)</text>
        <dbReference type="Rhea" id="RHEA:62372"/>
        <dbReference type="Rhea" id="RHEA-COMP:10167"/>
        <dbReference type="Rhea" id="RHEA-COMP:10193"/>
        <dbReference type="ChEBI" id="CHEBI:15378"/>
        <dbReference type="ChEBI" id="CHEBI:15636"/>
        <dbReference type="ChEBI" id="CHEBI:57453"/>
        <dbReference type="ChEBI" id="CHEBI:57783"/>
        <dbReference type="ChEBI" id="CHEBI:58349"/>
        <dbReference type="ChEBI" id="CHEBI:65315"/>
        <dbReference type="ChEBI" id="CHEBI:74447"/>
        <dbReference type="EC" id="2.1.1.74"/>
    </reaction>
</comment>
<comment type="cofactor">
    <cofactor evidence="1">
        <name>FAD</name>
        <dbReference type="ChEBI" id="CHEBI:57692"/>
    </cofactor>
</comment>
<comment type="subcellular location">
    <subcellularLocation>
        <location evidence="1">Cytoplasm</location>
    </subcellularLocation>
</comment>
<comment type="similarity">
    <text evidence="1">Belongs to the MnmG family. TrmFO subfamily.</text>
</comment>
<evidence type="ECO:0000255" key="1">
    <source>
        <dbReference type="HAMAP-Rule" id="MF_01037"/>
    </source>
</evidence>
<keyword id="KW-0963">Cytoplasm</keyword>
<keyword id="KW-0274">FAD</keyword>
<keyword id="KW-0285">Flavoprotein</keyword>
<keyword id="KW-0489">Methyltransferase</keyword>
<keyword id="KW-0520">NAD</keyword>
<keyword id="KW-0521">NADP</keyword>
<keyword id="KW-0808">Transferase</keyword>
<keyword id="KW-0819">tRNA processing</keyword>